<reference key="1">
    <citation type="journal article" date="2009" name="Environ. Microbiol.">
        <title>Genome sequence of Desulfobacterium autotrophicum HRM2, a marine sulfate reducer oxidizing organic carbon completely to carbon dioxide.</title>
        <authorList>
            <person name="Strittmatter A.W."/>
            <person name="Liesegang H."/>
            <person name="Rabus R."/>
            <person name="Decker I."/>
            <person name="Amann J."/>
            <person name="Andres S."/>
            <person name="Henne A."/>
            <person name="Fricke W.F."/>
            <person name="Martinez-Arias R."/>
            <person name="Bartels D."/>
            <person name="Goesmann A."/>
            <person name="Krause L."/>
            <person name="Puehler A."/>
            <person name="Klenk H.P."/>
            <person name="Richter M."/>
            <person name="Schuler M."/>
            <person name="Gloeckner F.O."/>
            <person name="Meyerdierks A."/>
            <person name="Gottschalk G."/>
            <person name="Amann R."/>
        </authorList>
    </citation>
    <scope>NUCLEOTIDE SEQUENCE [LARGE SCALE GENOMIC DNA]</scope>
    <source>
        <strain>ATCC 43914 / DSM 3382 / VKM B-1955 / HRM2</strain>
    </source>
</reference>
<proteinExistence type="inferred from homology"/>
<keyword id="KW-0240">DNA-directed RNA polymerase</keyword>
<keyword id="KW-0548">Nucleotidyltransferase</keyword>
<keyword id="KW-1185">Reference proteome</keyword>
<keyword id="KW-0804">Transcription</keyword>
<keyword id="KW-0808">Transferase</keyword>
<name>RPOB_DESAH</name>
<sequence length="1401" mass="156024">MTGSLLASKRIRKEFGSKSRVVDIPDLIGMQRTSFERFLQRNVPPEEREDIGIHLVFKSVLPIKDFTGTSSLEYVSYSFGETKHSMKECISRGMTYEIPVNITVRLVVYDVDKDAGVTSIRDIKEQEIYFGTIPLMTKRGTFIINGTERAVVSQLHRSSGVFFDHDKGKSHSSGKIIYTARIIPVRGSWIDMEIDPKDIVNIRIDRRRKFPVTILFKAFGYTNEDILSFFYKKEQIVKKDGILFKEFNPDNLKRNRASFDILDPETGEAVVKKGRLFTLRALKQLQVAGLKSIPISEEDIIGRGFATSVVHPETEEILAKAGSLIDPEVLEKIADAGITEFSILYVDTYSSDSMRKTLAVDKVTSRAEALIEIYRRLRPGNPATPEVAQDFIDHLFFKPAYYDLSNVGRLKMNHRLGMSTGIDVRTLRREDILLTAATLVELKDTQGAVDDIDHLGNRRVRAVGELLENQYRIGLVRMERAIKERMSMQEVDAMMPHDLVNPKPVSAVVREFFGTSQLSQFMDQTNPLSETTHKRRLSALGPGGLTRERAGFEVRDVHPSHYGRICPIETPEGPNIGLIVSLCTYARVNDFGFIETPYRIAKDGVVSKQITHLSAFEEKEHPIAQANAVLDDQGHLMNDLVTSRVGGEFEMVAKNDIEFMDVSPNQLVSVSASLIPFLENDDANRALMGSNMQRQAVPLIRSEAPLVGTGIEGVVARDSGVAIVAEHDGIVVDVDAKRIVVKNTENGKGSDDRTVTIYTASKFVRSNQNTCFNHRPIVKKGDAVRKGEVIADGPSTEMGELALGKNVTVAFMPWGGYNYEDSILVSERLVKEGVYTSVHVEEFEVVARDTKLGKEEITRDIPNAGEEALKDLDDSGIIRLGAEVKPGDILVGKITPKGETQLSPEEKLLRAIFGEKAGDVKDTSLRVPPGVEGVVTAAKVFSRRGLPKDDRTRLIEDLEIEKLEKDRDDEVRIITETIQERLEDILAGQALQAVVKKGKKVVVPAGTLVTRGLFEGISLTDLMGLTVEDSSLTEMAHVILEKAETQIKKARENFNNQASRYEKGDDLPPGVLKLIKINVAMKRVLSVGDKMAGRHGNKGVVSRILPVADLPYFEDGRTVDMVLNPLGVPSRMNVGQILEIHLGCAARGLGRQIDDLIYEKKTDELRARIKRIFTTPLIKTGERANKDKTHYDFSSHYTVEKSMAKRTNEEEIQFVDTIDHMDDTEFLEFASMYKNGVHMATPVFDGAAESEIKSLISYAGLDPSGQSTLYDGRTGEPFDKPITVGIMYMLKLHHLVDDKIHARSIGPYSLVTQQPLGGKAQFGGQRLGEMEVWAMEAYGAAHALQEFITVKSDDMTGRTRMYEKIVKGQNVLEPGMPESFRVLTKELQSLGLDINLLEGKK</sequence>
<feature type="chain" id="PRO_1000214474" description="DNA-directed RNA polymerase subunit beta">
    <location>
        <begin position="1"/>
        <end position="1401"/>
    </location>
</feature>
<protein>
    <recommendedName>
        <fullName evidence="1">DNA-directed RNA polymerase subunit beta</fullName>
        <shortName evidence="1">RNAP subunit beta</shortName>
        <ecNumber evidence="1">2.7.7.6</ecNumber>
    </recommendedName>
    <alternativeName>
        <fullName evidence="1">RNA polymerase subunit beta</fullName>
    </alternativeName>
    <alternativeName>
        <fullName evidence="1">Transcriptase subunit beta</fullName>
    </alternativeName>
</protein>
<dbReference type="EC" id="2.7.7.6" evidence="1"/>
<dbReference type="EMBL" id="CP001087">
    <property type="protein sequence ID" value="ACN16697.1"/>
    <property type="molecule type" value="Genomic_DNA"/>
</dbReference>
<dbReference type="RefSeq" id="WP_015905447.1">
    <property type="nucleotide sequence ID" value="NC_012108.1"/>
</dbReference>
<dbReference type="SMR" id="C0Q9X9"/>
<dbReference type="STRING" id="177437.HRM2_36320"/>
<dbReference type="KEGG" id="dat:HRM2_36320"/>
<dbReference type="eggNOG" id="COG0085">
    <property type="taxonomic scope" value="Bacteria"/>
</dbReference>
<dbReference type="HOGENOM" id="CLU_000524_4_3_7"/>
<dbReference type="OrthoDB" id="9803954at2"/>
<dbReference type="Proteomes" id="UP000000442">
    <property type="component" value="Chromosome"/>
</dbReference>
<dbReference type="GO" id="GO:0000428">
    <property type="term" value="C:DNA-directed RNA polymerase complex"/>
    <property type="evidence" value="ECO:0007669"/>
    <property type="project" value="UniProtKB-KW"/>
</dbReference>
<dbReference type="GO" id="GO:0003677">
    <property type="term" value="F:DNA binding"/>
    <property type="evidence" value="ECO:0007669"/>
    <property type="project" value="UniProtKB-UniRule"/>
</dbReference>
<dbReference type="GO" id="GO:0003899">
    <property type="term" value="F:DNA-directed RNA polymerase activity"/>
    <property type="evidence" value="ECO:0007669"/>
    <property type="project" value="UniProtKB-UniRule"/>
</dbReference>
<dbReference type="GO" id="GO:0032549">
    <property type="term" value="F:ribonucleoside binding"/>
    <property type="evidence" value="ECO:0007669"/>
    <property type="project" value="InterPro"/>
</dbReference>
<dbReference type="GO" id="GO:0006351">
    <property type="term" value="P:DNA-templated transcription"/>
    <property type="evidence" value="ECO:0007669"/>
    <property type="project" value="UniProtKB-UniRule"/>
</dbReference>
<dbReference type="CDD" id="cd00653">
    <property type="entry name" value="RNA_pol_B_RPB2"/>
    <property type="match status" value="1"/>
</dbReference>
<dbReference type="Gene3D" id="2.40.50.100">
    <property type="match status" value="1"/>
</dbReference>
<dbReference type="Gene3D" id="2.40.50.150">
    <property type="match status" value="1"/>
</dbReference>
<dbReference type="Gene3D" id="3.90.1100.10">
    <property type="match status" value="2"/>
</dbReference>
<dbReference type="Gene3D" id="2.30.150.10">
    <property type="entry name" value="DNA-directed RNA polymerase, beta subunit, external 1 domain"/>
    <property type="match status" value="1"/>
</dbReference>
<dbReference type="Gene3D" id="2.40.270.10">
    <property type="entry name" value="DNA-directed RNA polymerase, subunit 2, domain 6"/>
    <property type="match status" value="1"/>
</dbReference>
<dbReference type="Gene3D" id="3.90.1800.10">
    <property type="entry name" value="RNA polymerase alpha subunit dimerisation domain"/>
    <property type="match status" value="1"/>
</dbReference>
<dbReference type="Gene3D" id="3.90.1110.10">
    <property type="entry name" value="RNA polymerase Rpb2, domain 2"/>
    <property type="match status" value="1"/>
</dbReference>
<dbReference type="HAMAP" id="MF_01321">
    <property type="entry name" value="RNApol_bact_RpoB"/>
    <property type="match status" value="1"/>
</dbReference>
<dbReference type="InterPro" id="IPR042107">
    <property type="entry name" value="DNA-dir_RNA_pol_bsu_ext_1_sf"/>
</dbReference>
<dbReference type="InterPro" id="IPR019462">
    <property type="entry name" value="DNA-dir_RNA_pol_bsu_external_1"/>
</dbReference>
<dbReference type="InterPro" id="IPR015712">
    <property type="entry name" value="DNA-dir_RNA_pol_su2"/>
</dbReference>
<dbReference type="InterPro" id="IPR007120">
    <property type="entry name" value="DNA-dir_RNAP_su2_dom"/>
</dbReference>
<dbReference type="InterPro" id="IPR037033">
    <property type="entry name" value="DNA-dir_RNAP_su2_hyb_sf"/>
</dbReference>
<dbReference type="InterPro" id="IPR010243">
    <property type="entry name" value="RNA_pol_bsu_bac"/>
</dbReference>
<dbReference type="InterPro" id="IPR007121">
    <property type="entry name" value="RNA_pol_bsu_CS"/>
</dbReference>
<dbReference type="InterPro" id="IPR007644">
    <property type="entry name" value="RNA_pol_bsu_protrusion"/>
</dbReference>
<dbReference type="InterPro" id="IPR007642">
    <property type="entry name" value="RNA_pol_Rpb2_2"/>
</dbReference>
<dbReference type="InterPro" id="IPR037034">
    <property type="entry name" value="RNA_pol_Rpb2_2_sf"/>
</dbReference>
<dbReference type="InterPro" id="IPR007645">
    <property type="entry name" value="RNA_pol_Rpb2_3"/>
</dbReference>
<dbReference type="InterPro" id="IPR007641">
    <property type="entry name" value="RNA_pol_Rpb2_7"/>
</dbReference>
<dbReference type="InterPro" id="IPR014724">
    <property type="entry name" value="RNA_pol_RPB2_OB-fold"/>
</dbReference>
<dbReference type="NCBIfam" id="NF001616">
    <property type="entry name" value="PRK00405.1"/>
    <property type="match status" value="1"/>
</dbReference>
<dbReference type="NCBIfam" id="TIGR02013">
    <property type="entry name" value="rpoB"/>
    <property type="match status" value="1"/>
</dbReference>
<dbReference type="PANTHER" id="PTHR20856">
    <property type="entry name" value="DNA-DIRECTED RNA POLYMERASE I SUBUNIT 2"/>
    <property type="match status" value="1"/>
</dbReference>
<dbReference type="Pfam" id="PF04563">
    <property type="entry name" value="RNA_pol_Rpb2_1"/>
    <property type="match status" value="1"/>
</dbReference>
<dbReference type="Pfam" id="PF04561">
    <property type="entry name" value="RNA_pol_Rpb2_2"/>
    <property type="match status" value="2"/>
</dbReference>
<dbReference type="Pfam" id="PF04565">
    <property type="entry name" value="RNA_pol_Rpb2_3"/>
    <property type="match status" value="1"/>
</dbReference>
<dbReference type="Pfam" id="PF10385">
    <property type="entry name" value="RNA_pol_Rpb2_45"/>
    <property type="match status" value="1"/>
</dbReference>
<dbReference type="Pfam" id="PF00562">
    <property type="entry name" value="RNA_pol_Rpb2_6"/>
    <property type="match status" value="1"/>
</dbReference>
<dbReference type="Pfam" id="PF04560">
    <property type="entry name" value="RNA_pol_Rpb2_7"/>
    <property type="match status" value="1"/>
</dbReference>
<dbReference type="SUPFAM" id="SSF64484">
    <property type="entry name" value="beta and beta-prime subunits of DNA dependent RNA-polymerase"/>
    <property type="match status" value="1"/>
</dbReference>
<dbReference type="PROSITE" id="PS01166">
    <property type="entry name" value="RNA_POL_BETA"/>
    <property type="match status" value="1"/>
</dbReference>
<evidence type="ECO:0000255" key="1">
    <source>
        <dbReference type="HAMAP-Rule" id="MF_01321"/>
    </source>
</evidence>
<comment type="function">
    <text evidence="1">DNA-dependent RNA polymerase catalyzes the transcription of DNA into RNA using the four ribonucleoside triphosphates as substrates.</text>
</comment>
<comment type="catalytic activity">
    <reaction evidence="1">
        <text>RNA(n) + a ribonucleoside 5'-triphosphate = RNA(n+1) + diphosphate</text>
        <dbReference type="Rhea" id="RHEA:21248"/>
        <dbReference type="Rhea" id="RHEA-COMP:14527"/>
        <dbReference type="Rhea" id="RHEA-COMP:17342"/>
        <dbReference type="ChEBI" id="CHEBI:33019"/>
        <dbReference type="ChEBI" id="CHEBI:61557"/>
        <dbReference type="ChEBI" id="CHEBI:140395"/>
        <dbReference type="EC" id="2.7.7.6"/>
    </reaction>
</comment>
<comment type="subunit">
    <text evidence="1">The RNAP catalytic core consists of 2 alpha, 1 beta, 1 beta' and 1 omega subunit. When a sigma factor is associated with the core the holoenzyme is formed, which can initiate transcription.</text>
</comment>
<comment type="similarity">
    <text evidence="1">Belongs to the RNA polymerase beta chain family.</text>
</comment>
<gene>
    <name evidence="1" type="primary">rpoB</name>
    <name type="ordered locus">HRM2_36320</name>
</gene>
<organism>
    <name type="scientific">Desulforapulum autotrophicum (strain ATCC 43914 / DSM 3382 / VKM B-1955 / HRM2)</name>
    <name type="common">Desulfobacterium autotrophicum</name>
    <dbReference type="NCBI Taxonomy" id="177437"/>
    <lineage>
        <taxon>Bacteria</taxon>
        <taxon>Pseudomonadati</taxon>
        <taxon>Thermodesulfobacteriota</taxon>
        <taxon>Desulfobacteria</taxon>
        <taxon>Desulfobacterales</taxon>
        <taxon>Desulfobacteraceae</taxon>
        <taxon>Desulforapulum</taxon>
    </lineage>
</organism>
<accession>C0Q9X9</accession>